<feature type="chain" id="PRO_0000400374" description="ATP-dependent zinc metalloprotease FtsH 3">
    <location>
        <begin position="1"/>
        <end position="599"/>
    </location>
</feature>
<feature type="topological domain" description="Cytoplasmic" evidence="1">
    <location>
        <begin position="1"/>
        <end position="7"/>
    </location>
</feature>
<feature type="transmembrane region" description="Helical" evidence="1">
    <location>
        <begin position="8"/>
        <end position="28"/>
    </location>
</feature>
<feature type="topological domain" description="Extracellular" evidence="1">
    <location>
        <begin position="29"/>
        <end position="128"/>
    </location>
</feature>
<feature type="transmembrane region" description="Helical" evidence="1">
    <location>
        <begin position="129"/>
        <end position="149"/>
    </location>
</feature>
<feature type="topological domain" description="Cytoplasmic" evidence="1">
    <location>
        <begin position="150"/>
        <end position="599"/>
    </location>
</feature>
<feature type="active site" evidence="1">
    <location>
        <position position="437"/>
    </location>
</feature>
<feature type="binding site" evidence="1">
    <location>
        <begin position="214"/>
        <end position="221"/>
    </location>
    <ligand>
        <name>ATP</name>
        <dbReference type="ChEBI" id="CHEBI:30616"/>
    </ligand>
</feature>
<feature type="binding site" evidence="1">
    <location>
        <position position="436"/>
    </location>
    <ligand>
        <name>Zn(2+)</name>
        <dbReference type="ChEBI" id="CHEBI:29105"/>
        <note>catalytic</note>
    </ligand>
</feature>
<feature type="binding site" evidence="1">
    <location>
        <position position="440"/>
    </location>
    <ligand>
        <name>Zn(2+)</name>
        <dbReference type="ChEBI" id="CHEBI:29105"/>
        <note>catalytic</note>
    </ligand>
</feature>
<feature type="binding site" evidence="1">
    <location>
        <position position="512"/>
    </location>
    <ligand>
        <name>Zn(2+)</name>
        <dbReference type="ChEBI" id="CHEBI:29105"/>
        <note>catalytic</note>
    </ligand>
</feature>
<keyword id="KW-0067">ATP-binding</keyword>
<keyword id="KW-1003">Cell membrane</keyword>
<keyword id="KW-0378">Hydrolase</keyword>
<keyword id="KW-0472">Membrane</keyword>
<keyword id="KW-0479">Metal-binding</keyword>
<keyword id="KW-0482">Metalloprotease</keyword>
<keyword id="KW-0547">Nucleotide-binding</keyword>
<keyword id="KW-0645">Protease</keyword>
<keyword id="KW-1185">Reference proteome</keyword>
<keyword id="KW-0812">Transmembrane</keyword>
<keyword id="KW-1133">Transmembrane helix</keyword>
<keyword id="KW-0862">Zinc</keyword>
<proteinExistence type="inferred from homology"/>
<reference key="1">
    <citation type="journal article" date="2008" name="BMC Genomics">
        <title>The linear chromosome of the plant-pathogenic mycoplasma 'Candidatus Phytoplasma mali'.</title>
        <authorList>
            <person name="Kube M."/>
            <person name="Schneider B."/>
            <person name="Kuhl H."/>
            <person name="Dandekar T."/>
            <person name="Heitmann K."/>
            <person name="Migdoll A.M."/>
            <person name="Reinhardt R."/>
            <person name="Seemueller E."/>
        </authorList>
    </citation>
    <scope>NUCLEOTIDE SEQUENCE [LARGE SCALE GENOMIC DNA]</scope>
    <source>
        <strain>AT</strain>
    </source>
</reference>
<accession>B3R0R7</accession>
<gene>
    <name evidence="1" type="primary">ftsH3</name>
    <name type="ordered locus">ATP_00464</name>
</gene>
<protein>
    <recommendedName>
        <fullName evidence="1">ATP-dependent zinc metalloprotease FtsH 3</fullName>
        <ecNumber evidence="1">3.4.24.-</ecNumber>
    </recommendedName>
</protein>
<sequence>MKYKKKNILFITTIIVIYLAFLFNWLEIGIFKPKGESISESEMLSKISRKDISESVRYSVYKTMFLKDKPFDIRNVYQIELTTHNNEKFHAEIIKNTKEELSFELLPRNKISYQYEFRPFSWLLSIFSILLNFINVLSSLVFTIYIFLAIHRESGKLNSKSLITSKQKSLFTFKDVAGNTEEKEEMTELIDFLKQPQKYETIGAAIPRGVLLEGPPGTGKTLLAKALAGEASVPFYAVSGSEFVEMYVGVGASRVRKLFKEAKLNAPCVLFIDEIDVLGGRRGGNSSGGNQEKDQTLNQLLTEMDGFTPSQGIIVIGATNRADMLDAALLRPGRFDRKILVNLPDIKSRAEILKLHAQNKKLSSDIDFHQLAQQTPGMSGAQLAAVLNEASILTVRNHKDFITMTELSEALDRVLMGPAKKSIKYDPEERRMVAYHEAGHAVIGIKLKHAQKVQKITIIPRGNAGGYNLMMPEKETFFSSRKRMLAQIQSFLGGRVAEELVFDDISSGAFDDFRQATKIARLMVTKYGMSDLGVSQDSEFSDKKLIDTAIKKIIDNCYARTKHLMLENKTLLDQIAHLLLEQETITQAEIEQLVVNTKK</sequence>
<dbReference type="EC" id="3.4.24.-" evidence="1"/>
<dbReference type="EMBL" id="CU469464">
    <property type="protein sequence ID" value="CAP18651.1"/>
    <property type="molecule type" value="Genomic_DNA"/>
</dbReference>
<dbReference type="SMR" id="B3R0R7"/>
<dbReference type="STRING" id="37692.ATP_00464"/>
<dbReference type="KEGG" id="pml:ATP_00464"/>
<dbReference type="eggNOG" id="COG0465">
    <property type="taxonomic scope" value="Bacteria"/>
</dbReference>
<dbReference type="HOGENOM" id="CLU_000688_16_2_14"/>
<dbReference type="Proteomes" id="UP000002020">
    <property type="component" value="Chromosome"/>
</dbReference>
<dbReference type="GO" id="GO:0005886">
    <property type="term" value="C:plasma membrane"/>
    <property type="evidence" value="ECO:0007669"/>
    <property type="project" value="UniProtKB-SubCell"/>
</dbReference>
<dbReference type="GO" id="GO:0005524">
    <property type="term" value="F:ATP binding"/>
    <property type="evidence" value="ECO:0007669"/>
    <property type="project" value="UniProtKB-UniRule"/>
</dbReference>
<dbReference type="GO" id="GO:0016887">
    <property type="term" value="F:ATP hydrolysis activity"/>
    <property type="evidence" value="ECO:0007669"/>
    <property type="project" value="UniProtKB-UniRule"/>
</dbReference>
<dbReference type="GO" id="GO:0004176">
    <property type="term" value="F:ATP-dependent peptidase activity"/>
    <property type="evidence" value="ECO:0007669"/>
    <property type="project" value="InterPro"/>
</dbReference>
<dbReference type="GO" id="GO:0004222">
    <property type="term" value="F:metalloendopeptidase activity"/>
    <property type="evidence" value="ECO:0007669"/>
    <property type="project" value="InterPro"/>
</dbReference>
<dbReference type="GO" id="GO:0008270">
    <property type="term" value="F:zinc ion binding"/>
    <property type="evidence" value="ECO:0007669"/>
    <property type="project" value="UniProtKB-UniRule"/>
</dbReference>
<dbReference type="GO" id="GO:0030163">
    <property type="term" value="P:protein catabolic process"/>
    <property type="evidence" value="ECO:0007669"/>
    <property type="project" value="UniProtKB-UniRule"/>
</dbReference>
<dbReference type="GO" id="GO:0006508">
    <property type="term" value="P:proteolysis"/>
    <property type="evidence" value="ECO:0007669"/>
    <property type="project" value="UniProtKB-KW"/>
</dbReference>
<dbReference type="CDD" id="cd19501">
    <property type="entry name" value="RecA-like_FtsH"/>
    <property type="match status" value="1"/>
</dbReference>
<dbReference type="FunFam" id="1.10.8.60:FF:000001">
    <property type="entry name" value="ATP-dependent zinc metalloprotease FtsH"/>
    <property type="match status" value="1"/>
</dbReference>
<dbReference type="FunFam" id="1.20.58.760:FF:000001">
    <property type="entry name" value="ATP-dependent zinc metalloprotease FtsH"/>
    <property type="match status" value="1"/>
</dbReference>
<dbReference type="FunFam" id="3.40.50.300:FF:000001">
    <property type="entry name" value="ATP-dependent zinc metalloprotease FtsH"/>
    <property type="match status" value="1"/>
</dbReference>
<dbReference type="Gene3D" id="1.10.8.60">
    <property type="match status" value="1"/>
</dbReference>
<dbReference type="Gene3D" id="3.40.50.300">
    <property type="entry name" value="P-loop containing nucleotide triphosphate hydrolases"/>
    <property type="match status" value="1"/>
</dbReference>
<dbReference type="Gene3D" id="1.20.58.760">
    <property type="entry name" value="Peptidase M41"/>
    <property type="match status" value="1"/>
</dbReference>
<dbReference type="HAMAP" id="MF_01458">
    <property type="entry name" value="FtsH"/>
    <property type="match status" value="1"/>
</dbReference>
<dbReference type="InterPro" id="IPR003593">
    <property type="entry name" value="AAA+_ATPase"/>
</dbReference>
<dbReference type="InterPro" id="IPR041569">
    <property type="entry name" value="AAA_lid_3"/>
</dbReference>
<dbReference type="InterPro" id="IPR003959">
    <property type="entry name" value="ATPase_AAA_core"/>
</dbReference>
<dbReference type="InterPro" id="IPR003960">
    <property type="entry name" value="ATPase_AAA_CS"/>
</dbReference>
<dbReference type="InterPro" id="IPR005936">
    <property type="entry name" value="FtsH"/>
</dbReference>
<dbReference type="InterPro" id="IPR027417">
    <property type="entry name" value="P-loop_NTPase"/>
</dbReference>
<dbReference type="InterPro" id="IPR000642">
    <property type="entry name" value="Peptidase_M41"/>
</dbReference>
<dbReference type="InterPro" id="IPR037219">
    <property type="entry name" value="Peptidase_M41-like"/>
</dbReference>
<dbReference type="NCBIfam" id="TIGR01241">
    <property type="entry name" value="FtsH_fam"/>
    <property type="match status" value="1"/>
</dbReference>
<dbReference type="PANTHER" id="PTHR23076:SF97">
    <property type="entry name" value="ATP-DEPENDENT ZINC METALLOPROTEASE YME1L1"/>
    <property type="match status" value="1"/>
</dbReference>
<dbReference type="PANTHER" id="PTHR23076">
    <property type="entry name" value="METALLOPROTEASE M41 FTSH"/>
    <property type="match status" value="1"/>
</dbReference>
<dbReference type="Pfam" id="PF00004">
    <property type="entry name" value="AAA"/>
    <property type="match status" value="1"/>
</dbReference>
<dbReference type="Pfam" id="PF17862">
    <property type="entry name" value="AAA_lid_3"/>
    <property type="match status" value="1"/>
</dbReference>
<dbReference type="Pfam" id="PF01434">
    <property type="entry name" value="Peptidase_M41"/>
    <property type="match status" value="1"/>
</dbReference>
<dbReference type="SMART" id="SM00382">
    <property type="entry name" value="AAA"/>
    <property type="match status" value="1"/>
</dbReference>
<dbReference type="SUPFAM" id="SSF140990">
    <property type="entry name" value="FtsH protease domain-like"/>
    <property type="match status" value="1"/>
</dbReference>
<dbReference type="SUPFAM" id="SSF52540">
    <property type="entry name" value="P-loop containing nucleoside triphosphate hydrolases"/>
    <property type="match status" value="1"/>
</dbReference>
<dbReference type="PROSITE" id="PS00674">
    <property type="entry name" value="AAA"/>
    <property type="match status" value="1"/>
</dbReference>
<comment type="function">
    <text evidence="1">Acts as a processive, ATP-dependent zinc metallopeptidase for both cytoplasmic and membrane proteins. Plays a role in the quality control of integral membrane proteins.</text>
</comment>
<comment type="cofactor">
    <cofactor evidence="1">
        <name>Zn(2+)</name>
        <dbReference type="ChEBI" id="CHEBI:29105"/>
    </cofactor>
    <text evidence="1">Binds 1 zinc ion per subunit.</text>
</comment>
<comment type="subunit">
    <text evidence="1">Homohexamer.</text>
</comment>
<comment type="subcellular location">
    <subcellularLocation>
        <location evidence="1">Cell membrane</location>
        <topology evidence="1">Multi-pass membrane protein</topology>
        <orientation evidence="1">Cytoplasmic side</orientation>
    </subcellularLocation>
</comment>
<comment type="similarity">
    <text evidence="1">In the central section; belongs to the AAA ATPase family.</text>
</comment>
<comment type="similarity">
    <text evidence="1">In the C-terminal section; belongs to the peptidase M41 family.</text>
</comment>
<organism>
    <name type="scientific">Phytoplasma mali (strain AT)</name>
    <dbReference type="NCBI Taxonomy" id="482235"/>
    <lineage>
        <taxon>Bacteria</taxon>
        <taxon>Bacillati</taxon>
        <taxon>Mycoplasmatota</taxon>
        <taxon>Mollicutes</taxon>
        <taxon>Acholeplasmatales</taxon>
        <taxon>Acholeplasmataceae</taxon>
        <taxon>Candidatus Phytoplasma</taxon>
        <taxon>16SrX (Apple proliferation group)</taxon>
    </lineage>
</organism>
<evidence type="ECO:0000255" key="1">
    <source>
        <dbReference type="HAMAP-Rule" id="MF_01458"/>
    </source>
</evidence>
<name>FTSH3_PHYMT</name>